<accession>O31099</accession>
<comment type="function">
    <text>The periplasmic linker protein component of an organic solvent efflux pump. Involved in export of a number of low log POW compounds including hexane (log POW 3.5), toluene (log POW 2.5) and dimethylphthalate (log POW 2.3). The solvent resistance phenotype has been postulated to depend on the operon expression level.</text>
</comment>
<comment type="subcellular location">
    <subcellularLocation>
        <location evidence="4">Cell inner membrane</location>
        <topology evidence="2">Lipid-anchor</topology>
    </subcellularLocation>
</comment>
<comment type="induction">
    <text evidence="3">Low constitutive expression; the srpABC operon is further induced up to 17-fold by organic solvents (e.g. toluene and aliphatic solvents and alcohols) but not by antibiotics, heavy metals, pH, temperature, high NaCl or 60 mM acetic acid.</text>
</comment>
<comment type="similarity">
    <text evidence="4">Belongs to the membrane fusion protein (MFP) (TC 8.A.1) family.</text>
</comment>
<evidence type="ECO:0000255" key="1"/>
<evidence type="ECO:0000255" key="2">
    <source>
        <dbReference type="PROSITE-ProRule" id="PRU00303"/>
    </source>
</evidence>
<evidence type="ECO:0000269" key="3">
    <source>
    </source>
</evidence>
<evidence type="ECO:0000305" key="4"/>
<feature type="signal peptide" evidence="2">
    <location>
        <begin position="1"/>
        <end position="23"/>
    </location>
</feature>
<feature type="chain" id="PRO_0000018716" description="Solvent efflux pump periplasmic linker SrpA">
    <location>
        <begin position="24"/>
        <end position="382"/>
    </location>
</feature>
<feature type="coiled-coil region" evidence="1">
    <location>
        <begin position="98"/>
        <end position="127"/>
    </location>
</feature>
<feature type="lipid moiety-binding region" description="N-palmitoyl cysteine" evidence="2">
    <location>
        <position position="24"/>
    </location>
</feature>
<feature type="lipid moiety-binding region" description="S-diacylglycerol cysteine" evidence="2">
    <location>
        <position position="24"/>
    </location>
</feature>
<sequence>MRQIRSPRALRVIPLTALMLISGCGEKEQVSSATPPPDVGVYTVRAQALTLTTDLPGRTSAFRVAEVRPQVSGILQKRSFVEGAEVKLGQQLYQIDPRTYEAQLRRAEANRTSAQNLARRYETLLKTKAVSKQQYDDALAAWKQAEADYQVARIDVQYTRVLSPISGRIGRSTVTEGALVTNGQAQSLATVTQLDPIYVDVTQPITKLLGLQKALESGRLQKTGENQAEVSLTLDDGSAYPLPGTLKFSEVSVDPTTGSVTLRAEFPNPNRKLLPGMFVHALLKEGVQNAAILVPQQAISRDTRGVPSVWVVKADNTVESREIQTLRTVGNAWLISNGVTEGERIITEGVQRVRSGIAVNAVEAKNVNLVDGFAATTEASAN</sequence>
<dbReference type="EMBL" id="AF029405">
    <property type="protein sequence ID" value="AAD12178.1"/>
    <property type="molecule type" value="Genomic_DNA"/>
</dbReference>
<dbReference type="SMR" id="O31099"/>
<dbReference type="OrthoDB" id="9800613at2"/>
<dbReference type="GO" id="GO:0005886">
    <property type="term" value="C:plasma membrane"/>
    <property type="evidence" value="ECO:0007669"/>
    <property type="project" value="UniProtKB-SubCell"/>
</dbReference>
<dbReference type="GO" id="GO:0022857">
    <property type="term" value="F:transmembrane transporter activity"/>
    <property type="evidence" value="ECO:0007669"/>
    <property type="project" value="InterPro"/>
</dbReference>
<dbReference type="GO" id="GO:0046677">
    <property type="term" value="P:response to antibiotic"/>
    <property type="evidence" value="ECO:0007669"/>
    <property type="project" value="TreeGrafter"/>
</dbReference>
<dbReference type="FunFam" id="2.40.420.20:FF:000001">
    <property type="entry name" value="Efflux RND transporter periplasmic adaptor subunit"/>
    <property type="match status" value="1"/>
</dbReference>
<dbReference type="Gene3D" id="2.40.30.170">
    <property type="match status" value="1"/>
</dbReference>
<dbReference type="Gene3D" id="2.40.420.20">
    <property type="match status" value="1"/>
</dbReference>
<dbReference type="Gene3D" id="2.40.50.100">
    <property type="match status" value="1"/>
</dbReference>
<dbReference type="Gene3D" id="1.10.287.470">
    <property type="entry name" value="Helix hairpin bin"/>
    <property type="match status" value="1"/>
</dbReference>
<dbReference type="InterPro" id="IPR043602">
    <property type="entry name" value="CusB-like_dom_1"/>
</dbReference>
<dbReference type="InterPro" id="IPR032317">
    <property type="entry name" value="CusB_D23"/>
</dbReference>
<dbReference type="InterPro" id="IPR051160">
    <property type="entry name" value="MFP_Efflux"/>
</dbReference>
<dbReference type="InterPro" id="IPR006143">
    <property type="entry name" value="RND_pump_MFP"/>
</dbReference>
<dbReference type="NCBIfam" id="TIGR01730">
    <property type="entry name" value="RND_mfp"/>
    <property type="match status" value="1"/>
</dbReference>
<dbReference type="PANTHER" id="PTHR30158">
    <property type="entry name" value="ACRA/E-RELATED COMPONENT OF DRUG EFFLUX TRANSPORTER"/>
    <property type="match status" value="1"/>
</dbReference>
<dbReference type="PANTHER" id="PTHR30158:SF3">
    <property type="entry name" value="MULTIDRUG EFFLUX PUMP SUBUNIT ACRA-RELATED"/>
    <property type="match status" value="1"/>
</dbReference>
<dbReference type="Pfam" id="PF00529">
    <property type="entry name" value="CusB_dom_1"/>
    <property type="match status" value="1"/>
</dbReference>
<dbReference type="Pfam" id="PF16576">
    <property type="entry name" value="HlyD_D23"/>
    <property type="match status" value="1"/>
</dbReference>
<dbReference type="SUPFAM" id="SSF111369">
    <property type="entry name" value="HlyD-like secretion proteins"/>
    <property type="match status" value="1"/>
</dbReference>
<dbReference type="PROSITE" id="PS51257">
    <property type="entry name" value="PROKAR_LIPOPROTEIN"/>
    <property type="match status" value="1"/>
</dbReference>
<protein>
    <recommendedName>
        <fullName>Solvent efflux pump periplasmic linker SrpA</fullName>
    </recommendedName>
</protein>
<name>SRPA_PSEPU</name>
<keyword id="KW-0997">Cell inner membrane</keyword>
<keyword id="KW-1003">Cell membrane</keyword>
<keyword id="KW-0175">Coiled coil</keyword>
<keyword id="KW-0449">Lipoprotein</keyword>
<keyword id="KW-0472">Membrane</keyword>
<keyword id="KW-0564">Palmitate</keyword>
<keyword id="KW-0732">Signal</keyword>
<keyword id="KW-0813">Transport</keyword>
<gene>
    <name type="primary">srpA</name>
</gene>
<organism>
    <name type="scientific">Pseudomonas putida</name>
    <name type="common">Arthrobacter siderocapsulatus</name>
    <dbReference type="NCBI Taxonomy" id="303"/>
    <lineage>
        <taxon>Bacteria</taxon>
        <taxon>Pseudomonadati</taxon>
        <taxon>Pseudomonadota</taxon>
        <taxon>Gammaproteobacteria</taxon>
        <taxon>Pseudomonadales</taxon>
        <taxon>Pseudomonadaceae</taxon>
        <taxon>Pseudomonas</taxon>
    </lineage>
</organism>
<proteinExistence type="evidence at transcript level"/>
<reference key="1">
    <citation type="journal article" date="1998" name="J. Biol. Chem.">
        <title>Identification and molecular characterization of an efflux pump involved in Pseudomonas putida S12 solvent tolerance.</title>
        <authorList>
            <person name="Kieboom J."/>
            <person name="Dennis J.J."/>
            <person name="de Bont J.A.M."/>
            <person name="Zylstra G.J."/>
        </authorList>
    </citation>
    <scope>NUCLEOTIDE SEQUENCE [GENOMIC DNA]</scope>
    <scope>EFFLUX PUMP SUBSTRATES</scope>
    <source>
        <strain>ATCC 700801 / S12</strain>
    </source>
</reference>
<reference key="2">
    <citation type="journal article" date="1998" name="J. Bacteriol.">
        <title>Active efflux of organic solvents by Pseudomonas putida S12 is induced by solvents.</title>
        <authorList>
            <person name="Kieboom J."/>
            <person name="Dennis J.J."/>
            <person name="Zylstra G.J."/>
            <person name="de Bont J.A.M."/>
        </authorList>
    </citation>
    <scope>INDUCTION</scope>
    <source>
        <strain>ATCC 700801 / S12</strain>
    </source>
</reference>
<reference key="3">
    <citation type="submission" date="1999-02" db="EMBL/GenBank/DDBJ databases">
        <authorList>
            <person name="Kieboom J."/>
            <person name="Dennis J.J."/>
            <person name="Zylstra G.J."/>
            <person name="de Bont J.A.M."/>
        </authorList>
    </citation>
    <scope>NUCLEOTIDE SEQUENCE [GENOMIC DNA]</scope>
    <source>
        <strain>ATCC 700801 / S12</strain>
    </source>
</reference>